<sequence>MHDANIRVAIAGAGGRMGRQLIQAALALEGVQLGAALEREGSSLLGSDAGELAGAGKTGVTVQSSLDAVKDDFDVFIDFTRPEGTLNHLAFCRQHGKGMVIGTTGFDEAGKQAIRDAAADIAIVFAANFSVGVNVMLKLLEKAAKVMGDYTDIEIIEAHHRHKVDAPSGTALAMGEAIAHALDKDLKDCAVYSREGHTGERVPGTIGFATVRAGDIVGEHTAMFADIGERLEITHKASSRMTFANGAVRSALWLSGKESGLFDMRDVLDLNNL</sequence>
<dbReference type="EC" id="1.17.1.8" evidence="1"/>
<dbReference type="EMBL" id="CP001396">
    <property type="protein sequence ID" value="ACR62758.1"/>
    <property type="molecule type" value="Genomic_DNA"/>
</dbReference>
<dbReference type="RefSeq" id="WP_000543604.1">
    <property type="nucleotide sequence ID" value="NC_012759.1"/>
</dbReference>
<dbReference type="SMR" id="C4ZPV7"/>
<dbReference type="KEGG" id="ebw:BWG_0029"/>
<dbReference type="HOGENOM" id="CLU_047479_2_1_6"/>
<dbReference type="UniPathway" id="UPA00034">
    <property type="reaction ID" value="UER00018"/>
</dbReference>
<dbReference type="GO" id="GO:0005829">
    <property type="term" value="C:cytosol"/>
    <property type="evidence" value="ECO:0007669"/>
    <property type="project" value="TreeGrafter"/>
</dbReference>
<dbReference type="GO" id="GO:0008839">
    <property type="term" value="F:4-hydroxy-tetrahydrodipicolinate reductase"/>
    <property type="evidence" value="ECO:0007669"/>
    <property type="project" value="UniProtKB-EC"/>
</dbReference>
<dbReference type="GO" id="GO:0051287">
    <property type="term" value="F:NAD binding"/>
    <property type="evidence" value="ECO:0007669"/>
    <property type="project" value="UniProtKB-UniRule"/>
</dbReference>
<dbReference type="GO" id="GO:0050661">
    <property type="term" value="F:NADP binding"/>
    <property type="evidence" value="ECO:0007669"/>
    <property type="project" value="UniProtKB-UniRule"/>
</dbReference>
<dbReference type="GO" id="GO:0016726">
    <property type="term" value="F:oxidoreductase activity, acting on CH or CH2 groups, NAD or NADP as acceptor"/>
    <property type="evidence" value="ECO:0007669"/>
    <property type="project" value="UniProtKB-UniRule"/>
</dbReference>
<dbReference type="GO" id="GO:0019877">
    <property type="term" value="P:diaminopimelate biosynthetic process"/>
    <property type="evidence" value="ECO:0007669"/>
    <property type="project" value="UniProtKB-UniRule"/>
</dbReference>
<dbReference type="GO" id="GO:0009089">
    <property type="term" value="P:lysine biosynthetic process via diaminopimelate"/>
    <property type="evidence" value="ECO:0007669"/>
    <property type="project" value="UniProtKB-UniRule"/>
</dbReference>
<dbReference type="CDD" id="cd02274">
    <property type="entry name" value="DHDPR_N"/>
    <property type="match status" value="1"/>
</dbReference>
<dbReference type="FunFam" id="3.30.360.10:FF:000004">
    <property type="entry name" value="4-hydroxy-tetrahydrodipicolinate reductase"/>
    <property type="match status" value="1"/>
</dbReference>
<dbReference type="FunFam" id="3.40.50.720:FF:000048">
    <property type="entry name" value="4-hydroxy-tetrahydrodipicolinate reductase"/>
    <property type="match status" value="1"/>
</dbReference>
<dbReference type="Gene3D" id="3.30.360.10">
    <property type="entry name" value="Dihydrodipicolinate Reductase, domain 2"/>
    <property type="match status" value="1"/>
</dbReference>
<dbReference type="Gene3D" id="3.40.50.720">
    <property type="entry name" value="NAD(P)-binding Rossmann-like Domain"/>
    <property type="match status" value="1"/>
</dbReference>
<dbReference type="HAMAP" id="MF_00102">
    <property type="entry name" value="DapB"/>
    <property type="match status" value="1"/>
</dbReference>
<dbReference type="InterPro" id="IPR022663">
    <property type="entry name" value="DapB_C"/>
</dbReference>
<dbReference type="InterPro" id="IPR000846">
    <property type="entry name" value="DapB_N"/>
</dbReference>
<dbReference type="InterPro" id="IPR022664">
    <property type="entry name" value="DapB_N_CS"/>
</dbReference>
<dbReference type="InterPro" id="IPR023940">
    <property type="entry name" value="DHDPR_bac"/>
</dbReference>
<dbReference type="InterPro" id="IPR036291">
    <property type="entry name" value="NAD(P)-bd_dom_sf"/>
</dbReference>
<dbReference type="NCBIfam" id="TIGR00036">
    <property type="entry name" value="dapB"/>
    <property type="match status" value="1"/>
</dbReference>
<dbReference type="PANTHER" id="PTHR20836:SF0">
    <property type="entry name" value="4-HYDROXY-TETRAHYDRODIPICOLINATE REDUCTASE 1, CHLOROPLASTIC-RELATED"/>
    <property type="match status" value="1"/>
</dbReference>
<dbReference type="PANTHER" id="PTHR20836">
    <property type="entry name" value="DIHYDRODIPICOLINATE REDUCTASE"/>
    <property type="match status" value="1"/>
</dbReference>
<dbReference type="Pfam" id="PF05173">
    <property type="entry name" value="DapB_C"/>
    <property type="match status" value="1"/>
</dbReference>
<dbReference type="Pfam" id="PF01113">
    <property type="entry name" value="DapB_N"/>
    <property type="match status" value="1"/>
</dbReference>
<dbReference type="PIRSF" id="PIRSF000161">
    <property type="entry name" value="DHPR"/>
    <property type="match status" value="1"/>
</dbReference>
<dbReference type="SUPFAM" id="SSF55347">
    <property type="entry name" value="Glyceraldehyde-3-phosphate dehydrogenase-like, C-terminal domain"/>
    <property type="match status" value="1"/>
</dbReference>
<dbReference type="SUPFAM" id="SSF51735">
    <property type="entry name" value="NAD(P)-binding Rossmann-fold domains"/>
    <property type="match status" value="1"/>
</dbReference>
<dbReference type="PROSITE" id="PS01298">
    <property type="entry name" value="DAPB"/>
    <property type="match status" value="1"/>
</dbReference>
<reference key="1">
    <citation type="journal article" date="2009" name="J. Bacteriol.">
        <title>Genomic sequencing reveals regulatory mutations and recombinational events in the widely used MC4100 lineage of Escherichia coli K-12.</title>
        <authorList>
            <person name="Ferenci T."/>
            <person name="Zhou Z."/>
            <person name="Betteridge T."/>
            <person name="Ren Y."/>
            <person name="Liu Y."/>
            <person name="Feng L."/>
            <person name="Reeves P.R."/>
            <person name="Wang L."/>
        </authorList>
    </citation>
    <scope>NUCLEOTIDE SEQUENCE [LARGE SCALE GENOMIC DNA]</scope>
    <source>
        <strain>K12 / MC4100 / BW2952</strain>
    </source>
</reference>
<protein>
    <recommendedName>
        <fullName evidence="1">4-hydroxy-tetrahydrodipicolinate reductase</fullName>
        <shortName evidence="1">HTPA reductase</shortName>
        <ecNumber evidence="1">1.17.1.8</ecNumber>
    </recommendedName>
</protein>
<comment type="function">
    <text evidence="1">Catalyzes the conversion of 4-hydroxy-tetrahydrodipicolinate (HTPA) to tetrahydrodipicolinate.</text>
</comment>
<comment type="catalytic activity">
    <reaction evidence="1">
        <text>(S)-2,3,4,5-tetrahydrodipicolinate + NAD(+) + H2O = (2S,4S)-4-hydroxy-2,3,4,5-tetrahydrodipicolinate + NADH + H(+)</text>
        <dbReference type="Rhea" id="RHEA:35323"/>
        <dbReference type="ChEBI" id="CHEBI:15377"/>
        <dbReference type="ChEBI" id="CHEBI:15378"/>
        <dbReference type="ChEBI" id="CHEBI:16845"/>
        <dbReference type="ChEBI" id="CHEBI:57540"/>
        <dbReference type="ChEBI" id="CHEBI:57945"/>
        <dbReference type="ChEBI" id="CHEBI:67139"/>
        <dbReference type="EC" id="1.17.1.8"/>
    </reaction>
</comment>
<comment type="catalytic activity">
    <reaction evidence="1">
        <text>(S)-2,3,4,5-tetrahydrodipicolinate + NADP(+) + H2O = (2S,4S)-4-hydroxy-2,3,4,5-tetrahydrodipicolinate + NADPH + H(+)</text>
        <dbReference type="Rhea" id="RHEA:35331"/>
        <dbReference type="ChEBI" id="CHEBI:15377"/>
        <dbReference type="ChEBI" id="CHEBI:15378"/>
        <dbReference type="ChEBI" id="CHEBI:16845"/>
        <dbReference type="ChEBI" id="CHEBI:57783"/>
        <dbReference type="ChEBI" id="CHEBI:58349"/>
        <dbReference type="ChEBI" id="CHEBI:67139"/>
        <dbReference type="EC" id="1.17.1.8"/>
    </reaction>
</comment>
<comment type="pathway">
    <text evidence="1">Amino-acid biosynthesis; L-lysine biosynthesis via DAP pathway; (S)-tetrahydrodipicolinate from L-aspartate: step 4/4.</text>
</comment>
<comment type="subunit">
    <text evidence="1">Homotetramer.</text>
</comment>
<comment type="subcellular location">
    <subcellularLocation>
        <location evidence="1">Cytoplasm</location>
    </subcellularLocation>
</comment>
<comment type="similarity">
    <text evidence="1">Belongs to the DapB family.</text>
</comment>
<comment type="caution">
    <text evidence="2">Was originally thought to be a dihydrodipicolinate reductase (DHDPR), catalyzing the conversion of dihydrodipicolinate to tetrahydrodipicolinate. However, it was shown in E.coli that the substrate of the enzymatic reaction is not dihydrodipicolinate (DHDP) but in fact (2S,4S)-4-hydroxy-2,3,4,5-tetrahydrodipicolinic acid (HTPA), the product released by the DapA-catalyzed reaction.</text>
</comment>
<evidence type="ECO:0000255" key="1">
    <source>
        <dbReference type="HAMAP-Rule" id="MF_00102"/>
    </source>
</evidence>
<evidence type="ECO:0000305" key="2"/>
<feature type="chain" id="PRO_1000202810" description="4-hydroxy-tetrahydrodipicolinate reductase">
    <location>
        <begin position="1"/>
        <end position="273"/>
    </location>
</feature>
<feature type="active site" description="Proton donor/acceptor" evidence="1">
    <location>
        <position position="159"/>
    </location>
</feature>
<feature type="active site" description="Proton donor" evidence="1">
    <location>
        <position position="163"/>
    </location>
</feature>
<feature type="binding site" evidence="1">
    <location>
        <begin position="12"/>
        <end position="17"/>
    </location>
    <ligand>
        <name>NAD(+)</name>
        <dbReference type="ChEBI" id="CHEBI:57540"/>
    </ligand>
</feature>
<feature type="binding site" evidence="1">
    <location>
        <position position="38"/>
    </location>
    <ligand>
        <name>NAD(+)</name>
        <dbReference type="ChEBI" id="CHEBI:57540"/>
    </ligand>
</feature>
<feature type="binding site" evidence="1">
    <location>
        <position position="39"/>
    </location>
    <ligand>
        <name>NADP(+)</name>
        <dbReference type="ChEBI" id="CHEBI:58349"/>
    </ligand>
</feature>
<feature type="binding site" evidence="1">
    <location>
        <begin position="102"/>
        <end position="104"/>
    </location>
    <ligand>
        <name>NAD(+)</name>
        <dbReference type="ChEBI" id="CHEBI:57540"/>
    </ligand>
</feature>
<feature type="binding site" evidence="1">
    <location>
        <begin position="126"/>
        <end position="129"/>
    </location>
    <ligand>
        <name>NAD(+)</name>
        <dbReference type="ChEBI" id="CHEBI:57540"/>
    </ligand>
</feature>
<feature type="binding site" evidence="1">
    <location>
        <position position="160"/>
    </location>
    <ligand>
        <name>(S)-2,3,4,5-tetrahydrodipicolinate</name>
        <dbReference type="ChEBI" id="CHEBI:16845"/>
    </ligand>
</feature>
<feature type="binding site" evidence="1">
    <location>
        <begin position="169"/>
        <end position="170"/>
    </location>
    <ligand>
        <name>(S)-2,3,4,5-tetrahydrodipicolinate</name>
        <dbReference type="ChEBI" id="CHEBI:16845"/>
    </ligand>
</feature>
<proteinExistence type="inferred from homology"/>
<name>DAPB_ECOBW</name>
<organism>
    <name type="scientific">Escherichia coli (strain K12 / MC4100 / BW2952)</name>
    <dbReference type="NCBI Taxonomy" id="595496"/>
    <lineage>
        <taxon>Bacteria</taxon>
        <taxon>Pseudomonadati</taxon>
        <taxon>Pseudomonadota</taxon>
        <taxon>Gammaproteobacteria</taxon>
        <taxon>Enterobacterales</taxon>
        <taxon>Enterobacteriaceae</taxon>
        <taxon>Escherichia</taxon>
    </lineage>
</organism>
<gene>
    <name evidence="1" type="primary">dapB</name>
    <name type="ordered locus">BWG_0029</name>
</gene>
<accession>C4ZPV7</accession>
<keyword id="KW-0028">Amino-acid biosynthesis</keyword>
<keyword id="KW-0963">Cytoplasm</keyword>
<keyword id="KW-0220">Diaminopimelate biosynthesis</keyword>
<keyword id="KW-0457">Lysine biosynthesis</keyword>
<keyword id="KW-0520">NAD</keyword>
<keyword id="KW-0521">NADP</keyword>
<keyword id="KW-0560">Oxidoreductase</keyword>